<keyword id="KW-0067">ATP-binding</keyword>
<keyword id="KW-0317">Glutathione biosynthesis</keyword>
<keyword id="KW-0436">Ligase</keyword>
<keyword id="KW-0460">Magnesium</keyword>
<keyword id="KW-0464">Manganese</keyword>
<keyword id="KW-0479">Metal-binding</keyword>
<keyword id="KW-0547">Nucleotide-binding</keyword>
<keyword id="KW-1185">Reference proteome</keyword>
<dbReference type="EC" id="6.3.2.3" evidence="2"/>
<dbReference type="EMBL" id="AE005174">
    <property type="protein sequence ID" value="AAG58078.1"/>
    <property type="molecule type" value="Genomic_DNA"/>
</dbReference>
<dbReference type="EMBL" id="BA000007">
    <property type="protein sequence ID" value="BAB37246.1"/>
    <property type="molecule type" value="Genomic_DNA"/>
</dbReference>
<dbReference type="PIR" id="B85952">
    <property type="entry name" value="B85952"/>
</dbReference>
<dbReference type="PIR" id="G91106">
    <property type="entry name" value="G91106"/>
</dbReference>
<dbReference type="RefSeq" id="NP_311850.1">
    <property type="nucleotide sequence ID" value="NC_002695.1"/>
</dbReference>
<dbReference type="RefSeq" id="WP_000593272.1">
    <property type="nucleotide sequence ID" value="NZ_VOAI01000003.1"/>
</dbReference>
<dbReference type="SMR" id="P58578"/>
<dbReference type="STRING" id="155864.Z4292"/>
<dbReference type="GeneID" id="916355"/>
<dbReference type="KEGG" id="ece:Z4292"/>
<dbReference type="KEGG" id="ecs:ECs_3823"/>
<dbReference type="PATRIC" id="fig|386585.9.peg.3989"/>
<dbReference type="eggNOG" id="COG0189">
    <property type="taxonomic scope" value="Bacteria"/>
</dbReference>
<dbReference type="HOGENOM" id="CLU_068239_0_0_6"/>
<dbReference type="OMA" id="IWMRKDP"/>
<dbReference type="UniPathway" id="UPA00142">
    <property type="reaction ID" value="UER00210"/>
</dbReference>
<dbReference type="Proteomes" id="UP000000558">
    <property type="component" value="Chromosome"/>
</dbReference>
<dbReference type="Proteomes" id="UP000002519">
    <property type="component" value="Chromosome"/>
</dbReference>
<dbReference type="GO" id="GO:0005737">
    <property type="term" value="C:cytoplasm"/>
    <property type="evidence" value="ECO:0007669"/>
    <property type="project" value="TreeGrafter"/>
</dbReference>
<dbReference type="GO" id="GO:0005524">
    <property type="term" value="F:ATP binding"/>
    <property type="evidence" value="ECO:0007669"/>
    <property type="project" value="UniProtKB-UniRule"/>
</dbReference>
<dbReference type="GO" id="GO:0004363">
    <property type="term" value="F:glutathione synthase activity"/>
    <property type="evidence" value="ECO:0007669"/>
    <property type="project" value="UniProtKB-UniRule"/>
</dbReference>
<dbReference type="GO" id="GO:0046872">
    <property type="term" value="F:metal ion binding"/>
    <property type="evidence" value="ECO:0007669"/>
    <property type="project" value="UniProtKB-KW"/>
</dbReference>
<dbReference type="FunFam" id="3.30.1490.20:FF:000009">
    <property type="entry name" value="Glutathione synthetase"/>
    <property type="match status" value="1"/>
</dbReference>
<dbReference type="FunFam" id="3.30.470.20:FF:000010">
    <property type="entry name" value="Glutathione synthetase"/>
    <property type="match status" value="1"/>
</dbReference>
<dbReference type="FunFam" id="3.40.50.20:FF:000009">
    <property type="entry name" value="Glutathione synthetase"/>
    <property type="match status" value="1"/>
</dbReference>
<dbReference type="Gene3D" id="3.40.50.20">
    <property type="match status" value="1"/>
</dbReference>
<dbReference type="Gene3D" id="3.30.1490.20">
    <property type="entry name" value="ATP-grasp fold, A domain"/>
    <property type="match status" value="1"/>
</dbReference>
<dbReference type="Gene3D" id="3.30.470.20">
    <property type="entry name" value="ATP-grasp fold, B domain"/>
    <property type="match status" value="1"/>
</dbReference>
<dbReference type="HAMAP" id="MF_00162">
    <property type="entry name" value="GSH_S"/>
    <property type="match status" value="1"/>
</dbReference>
<dbReference type="InterPro" id="IPR011761">
    <property type="entry name" value="ATP-grasp"/>
</dbReference>
<dbReference type="InterPro" id="IPR013815">
    <property type="entry name" value="ATP_grasp_subdomain_1"/>
</dbReference>
<dbReference type="InterPro" id="IPR006284">
    <property type="entry name" value="Glut_synth_pro"/>
</dbReference>
<dbReference type="InterPro" id="IPR004218">
    <property type="entry name" value="GSHS_ATP-bd"/>
</dbReference>
<dbReference type="InterPro" id="IPR004215">
    <property type="entry name" value="GSHS_N"/>
</dbReference>
<dbReference type="InterPro" id="IPR016185">
    <property type="entry name" value="PreATP-grasp_dom_sf"/>
</dbReference>
<dbReference type="NCBIfam" id="TIGR01380">
    <property type="entry name" value="glut_syn"/>
    <property type="match status" value="1"/>
</dbReference>
<dbReference type="NCBIfam" id="NF003573">
    <property type="entry name" value="PRK05246.1"/>
    <property type="match status" value="1"/>
</dbReference>
<dbReference type="PANTHER" id="PTHR21621:SF4">
    <property type="entry name" value="GLUTATHIONE SYNTHETASE"/>
    <property type="match status" value="1"/>
</dbReference>
<dbReference type="PANTHER" id="PTHR21621">
    <property type="entry name" value="RIBOSOMAL PROTEIN S6 MODIFICATION PROTEIN"/>
    <property type="match status" value="1"/>
</dbReference>
<dbReference type="Pfam" id="PF02955">
    <property type="entry name" value="GSH-S_ATP"/>
    <property type="match status" value="1"/>
</dbReference>
<dbReference type="Pfam" id="PF02951">
    <property type="entry name" value="GSH-S_N"/>
    <property type="match status" value="1"/>
</dbReference>
<dbReference type="SUPFAM" id="SSF56059">
    <property type="entry name" value="Glutathione synthetase ATP-binding domain-like"/>
    <property type="match status" value="1"/>
</dbReference>
<dbReference type="SUPFAM" id="SSF52440">
    <property type="entry name" value="PreATP-grasp domain"/>
    <property type="match status" value="1"/>
</dbReference>
<dbReference type="PROSITE" id="PS50975">
    <property type="entry name" value="ATP_GRASP"/>
    <property type="match status" value="1"/>
</dbReference>
<proteinExistence type="inferred from homology"/>
<organism>
    <name type="scientific">Escherichia coli O157:H7</name>
    <dbReference type="NCBI Taxonomy" id="83334"/>
    <lineage>
        <taxon>Bacteria</taxon>
        <taxon>Pseudomonadati</taxon>
        <taxon>Pseudomonadota</taxon>
        <taxon>Gammaproteobacteria</taxon>
        <taxon>Enterobacterales</taxon>
        <taxon>Enterobacteriaceae</taxon>
        <taxon>Escherichia</taxon>
    </lineage>
</organism>
<protein>
    <recommendedName>
        <fullName evidence="2">Glutathione synthetase</fullName>
        <ecNumber evidence="2">6.3.2.3</ecNumber>
    </recommendedName>
    <alternativeName>
        <fullName evidence="2">GSH synthetase</fullName>
        <shortName evidence="2">GSH-S</shortName>
        <shortName evidence="2">GSHase</shortName>
    </alternativeName>
    <alternativeName>
        <fullName evidence="2">Glutathione synthase</fullName>
    </alternativeName>
</protein>
<feature type="chain" id="PRO_0000197467" description="Glutathione synthetase">
    <location>
        <begin position="1"/>
        <end position="315"/>
    </location>
</feature>
<feature type="domain" description="ATP-grasp" evidence="2">
    <location>
        <begin position="125"/>
        <end position="310"/>
    </location>
</feature>
<feature type="binding site" evidence="2">
    <location>
        <begin position="151"/>
        <end position="207"/>
    </location>
    <ligand>
        <name>ATP</name>
        <dbReference type="ChEBI" id="CHEBI:30616"/>
    </ligand>
</feature>
<feature type="binding site" evidence="2">
    <location>
        <position position="281"/>
    </location>
    <ligand>
        <name>Mg(2+)</name>
        <dbReference type="ChEBI" id="CHEBI:18420"/>
    </ligand>
</feature>
<feature type="binding site" evidence="2">
    <location>
        <position position="283"/>
    </location>
    <ligand>
        <name>Mg(2+)</name>
        <dbReference type="ChEBI" id="CHEBI:18420"/>
    </ligand>
</feature>
<sequence>MIKLGIVMDPIANINIKKDSSFAMLLEAQRRGYELHYMEMGDLYLINGEARAHTRTLNVKQNYEEWFSFVGEQDLPLADLDVILMRKDPPFDTEFIYATYILERAEEKGTLIVNKPQSLRDCNEKLFTAWFSDLTPETLVTRNKAQLKAFWEKHSDIILKPLDGMGGASIFRVKEGDPNLGVIAETLTEHGTRYCMAQNYLPAIKDGDKRVLVVDGEPVPYCLARIPQGGETRGNLAAGGRGEPRPLTESDWKIARQIGPTLKEKGLIFVGLDIIGDRLTEINVTSPTCIREIEAEFPVSITGMLMDAIEARLQQ</sequence>
<gene>
    <name evidence="2" type="primary">gshB</name>
    <name type="ordered locus">Z4292</name>
    <name type="ordered locus">ECs3823</name>
</gene>
<comment type="catalytic activity">
    <reaction evidence="2">
        <text>gamma-L-glutamyl-L-cysteine + glycine + ATP = glutathione + ADP + phosphate + H(+)</text>
        <dbReference type="Rhea" id="RHEA:13557"/>
        <dbReference type="ChEBI" id="CHEBI:15378"/>
        <dbReference type="ChEBI" id="CHEBI:30616"/>
        <dbReference type="ChEBI" id="CHEBI:43474"/>
        <dbReference type="ChEBI" id="CHEBI:57305"/>
        <dbReference type="ChEBI" id="CHEBI:57925"/>
        <dbReference type="ChEBI" id="CHEBI:58173"/>
        <dbReference type="ChEBI" id="CHEBI:456216"/>
        <dbReference type="EC" id="6.3.2.3"/>
    </reaction>
</comment>
<comment type="cofactor">
    <cofactor evidence="1">
        <name>Mg(2+)</name>
        <dbReference type="ChEBI" id="CHEBI:18420"/>
    </cofactor>
    <cofactor evidence="1">
        <name>Mn(2+)</name>
        <dbReference type="ChEBI" id="CHEBI:29035"/>
    </cofactor>
    <text evidence="1">Binds 1 Mg(2+) or Mn(2+) ion per subunit.</text>
</comment>
<comment type="pathway">
    <text evidence="2">Sulfur metabolism; glutathione biosynthesis; glutathione from L-cysteine and L-glutamate: step 2/2.</text>
</comment>
<comment type="similarity">
    <text evidence="2">Belongs to the prokaryotic GSH synthase family.</text>
</comment>
<evidence type="ECO:0000250" key="1"/>
<evidence type="ECO:0000255" key="2">
    <source>
        <dbReference type="HAMAP-Rule" id="MF_00162"/>
    </source>
</evidence>
<accession>P58578</accession>
<reference key="1">
    <citation type="journal article" date="2001" name="Nature">
        <title>Genome sequence of enterohaemorrhagic Escherichia coli O157:H7.</title>
        <authorList>
            <person name="Perna N.T."/>
            <person name="Plunkett G. III"/>
            <person name="Burland V."/>
            <person name="Mau B."/>
            <person name="Glasner J.D."/>
            <person name="Rose D.J."/>
            <person name="Mayhew G.F."/>
            <person name="Evans P.S."/>
            <person name="Gregor J."/>
            <person name="Kirkpatrick H.A."/>
            <person name="Posfai G."/>
            <person name="Hackett J."/>
            <person name="Klink S."/>
            <person name="Boutin A."/>
            <person name="Shao Y."/>
            <person name="Miller L."/>
            <person name="Grotbeck E.J."/>
            <person name="Davis N.W."/>
            <person name="Lim A."/>
            <person name="Dimalanta E.T."/>
            <person name="Potamousis K."/>
            <person name="Apodaca J."/>
            <person name="Anantharaman T.S."/>
            <person name="Lin J."/>
            <person name="Yen G."/>
            <person name="Schwartz D.C."/>
            <person name="Welch R.A."/>
            <person name="Blattner F.R."/>
        </authorList>
    </citation>
    <scope>NUCLEOTIDE SEQUENCE [LARGE SCALE GENOMIC DNA]</scope>
    <source>
        <strain>O157:H7 / EDL933 / ATCC 700927 / EHEC</strain>
    </source>
</reference>
<reference key="2">
    <citation type="journal article" date="2001" name="DNA Res.">
        <title>Complete genome sequence of enterohemorrhagic Escherichia coli O157:H7 and genomic comparison with a laboratory strain K-12.</title>
        <authorList>
            <person name="Hayashi T."/>
            <person name="Makino K."/>
            <person name="Ohnishi M."/>
            <person name="Kurokawa K."/>
            <person name="Ishii K."/>
            <person name="Yokoyama K."/>
            <person name="Han C.-G."/>
            <person name="Ohtsubo E."/>
            <person name="Nakayama K."/>
            <person name="Murata T."/>
            <person name="Tanaka M."/>
            <person name="Tobe T."/>
            <person name="Iida T."/>
            <person name="Takami H."/>
            <person name="Honda T."/>
            <person name="Sasakawa C."/>
            <person name="Ogasawara N."/>
            <person name="Yasunaga T."/>
            <person name="Kuhara S."/>
            <person name="Shiba T."/>
            <person name="Hattori M."/>
            <person name="Shinagawa H."/>
        </authorList>
    </citation>
    <scope>NUCLEOTIDE SEQUENCE [LARGE SCALE GENOMIC DNA]</scope>
    <source>
        <strain>O157:H7 / Sakai / RIMD 0509952 / EHEC</strain>
    </source>
</reference>
<name>GSHB_ECO57</name>